<sequence>MRTSSFLDRLIGEVDSALRTLVLPQKRITTRQSPAENLADTVLSAQEKKHISGLMRVNHAGEVCAQALYQGQALTARLTHIKEQMASAAAEEVDHLAWCEERLYELGSKPSLLNPIWYCGSVLLGALAGLAGDKISLGFVAETERQVTAHLQRHLHYLPEKDKKTIAILKRMQEDEEHHAHTAMEAGAVELPYIIKQLMNAVSKLMTQSSYYI</sequence>
<reference key="1">
    <citation type="submission" date="2006-11" db="EMBL/GenBank/DDBJ databases">
        <title>Identification and characterization of a new conjugation/ type IVA secretion system (trb/tra) of L. pneumophila Corby localized on a mobile genomic island.</title>
        <authorList>
            <person name="Gloeckner G."/>
            <person name="Albert-Weissenberger C."/>
            <person name="Weinmann E."/>
            <person name="Jacobi S."/>
            <person name="Schunder E."/>
            <person name="Steinert M."/>
            <person name="Buchrieser C."/>
            <person name="Hacker J."/>
            <person name="Heuner K."/>
        </authorList>
    </citation>
    <scope>NUCLEOTIDE SEQUENCE [LARGE SCALE GENOMIC DNA]</scope>
    <source>
        <strain>Corby</strain>
    </source>
</reference>
<accession>A5I9H9</accession>
<comment type="function">
    <text evidence="1">Catalyzes the hydroxylation of 2-nonaprenyl-3-methyl-6-methoxy-1,4-benzoquinol during ubiquinone biosynthesis.</text>
</comment>
<comment type="catalytic activity">
    <reaction evidence="1">
        <text>a 5-methoxy-2-methyl-3-(all-trans-polyprenyl)benzene-1,4-diol + AH2 + O2 = a 3-demethylubiquinol + A + H2O</text>
        <dbReference type="Rhea" id="RHEA:50908"/>
        <dbReference type="Rhea" id="RHEA-COMP:10859"/>
        <dbReference type="Rhea" id="RHEA-COMP:10914"/>
        <dbReference type="ChEBI" id="CHEBI:13193"/>
        <dbReference type="ChEBI" id="CHEBI:15377"/>
        <dbReference type="ChEBI" id="CHEBI:15379"/>
        <dbReference type="ChEBI" id="CHEBI:17499"/>
        <dbReference type="ChEBI" id="CHEBI:84167"/>
        <dbReference type="ChEBI" id="CHEBI:84422"/>
        <dbReference type="EC" id="1.14.99.60"/>
    </reaction>
</comment>
<comment type="cofactor">
    <cofactor evidence="1">
        <name>Fe cation</name>
        <dbReference type="ChEBI" id="CHEBI:24875"/>
    </cofactor>
    <text evidence="1">Binds 2 iron ions per subunit.</text>
</comment>
<comment type="pathway">
    <text evidence="1">Cofactor biosynthesis; ubiquinone biosynthesis.</text>
</comment>
<comment type="subcellular location">
    <subcellularLocation>
        <location evidence="1">Cell membrane</location>
        <topology evidence="1">Peripheral membrane protein</topology>
    </subcellularLocation>
</comment>
<comment type="similarity">
    <text evidence="1">Belongs to the COQ7 family.</text>
</comment>
<name>COQ7_LEGPC</name>
<feature type="chain" id="PRO_0000338694" description="3-demethoxyubiquinol 3-hydroxylase">
    <location>
        <begin position="1"/>
        <end position="213"/>
    </location>
</feature>
<feature type="binding site" evidence="1">
    <location>
        <position position="62"/>
    </location>
    <ligand>
        <name>Fe cation</name>
        <dbReference type="ChEBI" id="CHEBI:24875"/>
        <label>1</label>
    </ligand>
</feature>
<feature type="binding site" evidence="1">
    <location>
        <position position="92"/>
    </location>
    <ligand>
        <name>Fe cation</name>
        <dbReference type="ChEBI" id="CHEBI:24875"/>
        <label>1</label>
    </ligand>
</feature>
<feature type="binding site" evidence="1">
    <location>
        <position position="92"/>
    </location>
    <ligand>
        <name>Fe cation</name>
        <dbReference type="ChEBI" id="CHEBI:24875"/>
        <label>2</label>
    </ligand>
</feature>
<feature type="binding site" evidence="1">
    <location>
        <position position="95"/>
    </location>
    <ligand>
        <name>Fe cation</name>
        <dbReference type="ChEBI" id="CHEBI:24875"/>
        <label>1</label>
    </ligand>
</feature>
<feature type="binding site" evidence="1">
    <location>
        <position position="144"/>
    </location>
    <ligand>
        <name>Fe cation</name>
        <dbReference type="ChEBI" id="CHEBI:24875"/>
        <label>2</label>
    </ligand>
</feature>
<feature type="binding site" evidence="1">
    <location>
        <position position="176"/>
    </location>
    <ligand>
        <name>Fe cation</name>
        <dbReference type="ChEBI" id="CHEBI:24875"/>
        <label>1</label>
    </ligand>
</feature>
<feature type="binding site" evidence="1">
    <location>
        <position position="176"/>
    </location>
    <ligand>
        <name>Fe cation</name>
        <dbReference type="ChEBI" id="CHEBI:24875"/>
        <label>2</label>
    </ligand>
</feature>
<feature type="binding site" evidence="1">
    <location>
        <position position="179"/>
    </location>
    <ligand>
        <name>Fe cation</name>
        <dbReference type="ChEBI" id="CHEBI:24875"/>
        <label>2</label>
    </ligand>
</feature>
<organism>
    <name type="scientific">Legionella pneumophila (strain Corby)</name>
    <dbReference type="NCBI Taxonomy" id="400673"/>
    <lineage>
        <taxon>Bacteria</taxon>
        <taxon>Pseudomonadati</taxon>
        <taxon>Pseudomonadota</taxon>
        <taxon>Gammaproteobacteria</taxon>
        <taxon>Legionellales</taxon>
        <taxon>Legionellaceae</taxon>
        <taxon>Legionella</taxon>
    </lineage>
</organism>
<evidence type="ECO:0000255" key="1">
    <source>
        <dbReference type="HAMAP-Rule" id="MF_01658"/>
    </source>
</evidence>
<protein>
    <recommendedName>
        <fullName evidence="1">3-demethoxyubiquinol 3-hydroxylase</fullName>
        <shortName evidence="1">DMQ hydroxylase</shortName>
        <ecNumber evidence="1">1.14.99.60</ecNumber>
    </recommendedName>
    <alternativeName>
        <fullName evidence="1">2-nonaprenyl-3-methyl-6-methoxy-1,4-benzoquinol hydroxylase</fullName>
    </alternativeName>
</protein>
<proteinExistence type="inferred from homology"/>
<keyword id="KW-1003">Cell membrane</keyword>
<keyword id="KW-0408">Iron</keyword>
<keyword id="KW-0472">Membrane</keyword>
<keyword id="KW-0479">Metal-binding</keyword>
<keyword id="KW-0503">Monooxygenase</keyword>
<keyword id="KW-0560">Oxidoreductase</keyword>
<keyword id="KW-0831">Ubiquinone biosynthesis</keyword>
<dbReference type="EC" id="1.14.99.60" evidence="1"/>
<dbReference type="EMBL" id="CP000675">
    <property type="protein sequence ID" value="ABQ54029.1"/>
    <property type="molecule type" value="Genomic_DNA"/>
</dbReference>
<dbReference type="RefSeq" id="WP_011945219.1">
    <property type="nucleotide sequence ID" value="NZ_JAPMSS010000003.1"/>
</dbReference>
<dbReference type="SMR" id="A5I9H9"/>
<dbReference type="KEGG" id="lpc:LPC_0029"/>
<dbReference type="HOGENOM" id="CLU_088601_0_0_6"/>
<dbReference type="UniPathway" id="UPA00232"/>
<dbReference type="GO" id="GO:0005886">
    <property type="term" value="C:plasma membrane"/>
    <property type="evidence" value="ECO:0007669"/>
    <property type="project" value="UniProtKB-SubCell"/>
</dbReference>
<dbReference type="GO" id="GO:0008682">
    <property type="term" value="F:3-demethoxyubiquinol 3-hydroxylase activity"/>
    <property type="evidence" value="ECO:0007669"/>
    <property type="project" value="UniProtKB-EC"/>
</dbReference>
<dbReference type="GO" id="GO:0046872">
    <property type="term" value="F:metal ion binding"/>
    <property type="evidence" value="ECO:0007669"/>
    <property type="project" value="UniProtKB-KW"/>
</dbReference>
<dbReference type="GO" id="GO:0006744">
    <property type="term" value="P:ubiquinone biosynthetic process"/>
    <property type="evidence" value="ECO:0007669"/>
    <property type="project" value="UniProtKB-UniRule"/>
</dbReference>
<dbReference type="CDD" id="cd01042">
    <property type="entry name" value="DMQH"/>
    <property type="match status" value="1"/>
</dbReference>
<dbReference type="Gene3D" id="1.20.1260.10">
    <property type="match status" value="1"/>
</dbReference>
<dbReference type="HAMAP" id="MF_01658">
    <property type="entry name" value="COQ7"/>
    <property type="match status" value="1"/>
</dbReference>
<dbReference type="InterPro" id="IPR047809">
    <property type="entry name" value="COQ7_proteobact"/>
</dbReference>
<dbReference type="InterPro" id="IPR012347">
    <property type="entry name" value="Ferritin-like"/>
</dbReference>
<dbReference type="InterPro" id="IPR009078">
    <property type="entry name" value="Ferritin-like_SF"/>
</dbReference>
<dbReference type="InterPro" id="IPR011566">
    <property type="entry name" value="Ubq_synth_Coq7"/>
</dbReference>
<dbReference type="NCBIfam" id="NF033656">
    <property type="entry name" value="DMQ_monoox_COQ7"/>
    <property type="match status" value="1"/>
</dbReference>
<dbReference type="PANTHER" id="PTHR11237:SF4">
    <property type="entry name" value="5-DEMETHOXYUBIQUINONE HYDROXYLASE, MITOCHONDRIAL"/>
    <property type="match status" value="1"/>
</dbReference>
<dbReference type="PANTHER" id="PTHR11237">
    <property type="entry name" value="COENZYME Q10 BIOSYNTHESIS PROTEIN 7"/>
    <property type="match status" value="1"/>
</dbReference>
<dbReference type="Pfam" id="PF03232">
    <property type="entry name" value="COQ7"/>
    <property type="match status" value="1"/>
</dbReference>
<dbReference type="SUPFAM" id="SSF47240">
    <property type="entry name" value="Ferritin-like"/>
    <property type="match status" value="1"/>
</dbReference>
<gene>
    <name evidence="1" type="primary">coq7</name>
    <name type="ordered locus">LPC_0029</name>
</gene>